<proteinExistence type="evidence at transcript level"/>
<name>SH3R1_XENTR</name>
<protein>
    <recommendedName>
        <fullName>E3 ubiquitin-protein ligase SH3RF1</fullName>
        <ecNumber evidence="4">2.3.2.27</ecNumber>
    </recommendedName>
    <alternativeName>
        <fullName>Plenty of SH3s</fullName>
        <shortName>Protein POSH</shortName>
    </alternativeName>
    <alternativeName>
        <fullName evidence="8">RING-type E3 ubiquitin transferase SH3RF1</fullName>
    </alternativeName>
    <alternativeName>
        <fullName>SH3 domain-containing RING finger protein 1</fullName>
    </alternativeName>
</protein>
<keyword id="KW-0966">Cell projection</keyword>
<keyword id="KW-0963">Cytoplasm</keyword>
<keyword id="KW-0333">Golgi apparatus</keyword>
<keyword id="KW-0479">Metal-binding</keyword>
<keyword id="KW-1185">Reference proteome</keyword>
<keyword id="KW-0677">Repeat</keyword>
<keyword id="KW-0728">SH3 domain</keyword>
<keyword id="KW-0808">Transferase</keyword>
<keyword id="KW-0832">Ubl conjugation</keyword>
<keyword id="KW-0833">Ubl conjugation pathway</keyword>
<keyword id="KW-0862">Zinc</keyword>
<keyword id="KW-0863">Zinc-finger</keyword>
<sequence>MDESALLDLLECPVCLERLDASAKVLPCQHTFCKRCLLGIVSSRNELRCPECRTLVECGVDELPSNILLVRLLDGIKQRPRKAGVGGSAGNSTNVLRAQGSLTTNCGLNDAQNIHGGQQRIQARSPPVRGVPQLPCAKALYNYEGKEPGDLKFNKGDIIVLRRQVDENWYHGEINGIHGFFPTNFVQIIKPLPQPPPQCKALYDFEVKDKEADKDCLPFLKDDILTVIRRVDENWAEGMLGDKIGIFPISYVEFNSAAKQLIELDKPSGVDTGEGSSGTTHSSNSQKQADAKKNTKKRHSFTSLTMSNKSSQSVQNRHSMEISPPVLISSSNPTAAARISELTGLSCSAPSQVHISTTGLIVTPPPSSPVVSGPAFTFPPEVTYQAALGDLNPPLLPPPPLATPVITSTSSGAAAAVQRSISGPAEQVTHLRTSTRPSVFVAIYPYIPRKEDELELRKGEMFLVFERCQDGWFKGTSMHTSKIGVFPGNYVAPVTRALTTATPAKVAMATASSSNVVNLVTPTPPGAPCQKLQGNGAEFAKTVSTNGVPPAGIPGSHIQSSPQAKVLLHMSGQMTVNQARNAVRTAAAHSQDRPTAAVTPIQAQIPSASVLPQQAATSQQMPPPLSGPAAYINAAMNISRPSVPVASAASSSVSSAAFETECNWKSGSGLAACSFPENVSAPLNSAANKQDKDSKKEKKGLLKLLSGASTKRKPRSSPPHSPTQELEQTNSEAALEGAVGPDILPVNGNGRVASCTVDCDLVSASALVQDNRKPASLDTNVPIAPPPRQPCSSLGTVLNDSRPCERYRVVVSYPPQSEAELELKEGDIVFVHKKREDGWFKGTLQRNGKTGLFPGSFVENI</sequence>
<gene>
    <name type="primary">sh3rf1</name>
    <name type="synonym">posh</name>
    <name type="ORF">TNeu006c09.1</name>
</gene>
<evidence type="ECO:0000250" key="1">
    <source>
        <dbReference type="UniProtKB" id="Q69ZI1"/>
    </source>
</evidence>
<evidence type="ECO:0000250" key="2">
    <source>
        <dbReference type="UniProtKB" id="Q6NRD3"/>
    </source>
</evidence>
<evidence type="ECO:0000250" key="3">
    <source>
        <dbReference type="UniProtKB" id="Q71F54"/>
    </source>
</evidence>
<evidence type="ECO:0000250" key="4">
    <source>
        <dbReference type="UniProtKB" id="Q7Z6J0"/>
    </source>
</evidence>
<evidence type="ECO:0000255" key="5">
    <source>
        <dbReference type="PROSITE-ProRule" id="PRU00175"/>
    </source>
</evidence>
<evidence type="ECO:0000255" key="6">
    <source>
        <dbReference type="PROSITE-ProRule" id="PRU00192"/>
    </source>
</evidence>
<evidence type="ECO:0000256" key="7">
    <source>
        <dbReference type="SAM" id="MobiDB-lite"/>
    </source>
</evidence>
<evidence type="ECO:0000305" key="8"/>
<comment type="function">
    <text evidence="1 2 4">Has E3 ubiquitin-protein ligase activity. In the absence of an external substrate, it can catalyze self-ubiquitination. Acts as a scaffold protein that contributes to the effective activation of the JNK signaling pathway.</text>
</comment>
<comment type="catalytic activity">
    <reaction evidence="4">
        <text>S-ubiquitinyl-[E2 ubiquitin-conjugating enzyme]-L-cysteine + [acceptor protein]-L-lysine = [E2 ubiquitin-conjugating enzyme]-L-cysteine + N(6)-ubiquitinyl-[acceptor protein]-L-lysine.</text>
        <dbReference type="EC" id="2.3.2.27"/>
    </reaction>
</comment>
<comment type="pathway">
    <text>Protein modification; protein ubiquitination.</text>
</comment>
<comment type="subcellular location">
    <subcellularLocation>
        <location evidence="3">Cytoplasm</location>
        <location evidence="3">Perinuclear region</location>
    </subcellularLocation>
    <subcellularLocation>
        <location evidence="1">Cell projection</location>
        <location evidence="1">Lamellipodium</location>
    </subcellularLocation>
    <subcellularLocation>
        <location evidence="1">Golgi apparatus</location>
        <location evidence="1">trans-Golgi network</location>
    </subcellularLocation>
</comment>
<comment type="domain">
    <text evidence="4">The RING finger domain is required for ubiquitin ligase activity and autoubiquitination.</text>
</comment>
<comment type="PTM">
    <text evidence="3">Autoubiquitinated. Ubiquitinated by SH3RF2, leading to proteasome-mediated degradation.</text>
</comment>
<comment type="similarity">
    <text evidence="8">Belongs to the SH3RF family.</text>
</comment>
<organism>
    <name type="scientific">Xenopus tropicalis</name>
    <name type="common">Western clawed frog</name>
    <name type="synonym">Silurana tropicalis</name>
    <dbReference type="NCBI Taxonomy" id="8364"/>
    <lineage>
        <taxon>Eukaryota</taxon>
        <taxon>Metazoa</taxon>
        <taxon>Chordata</taxon>
        <taxon>Craniata</taxon>
        <taxon>Vertebrata</taxon>
        <taxon>Euteleostomi</taxon>
        <taxon>Amphibia</taxon>
        <taxon>Batrachia</taxon>
        <taxon>Anura</taxon>
        <taxon>Pipoidea</taxon>
        <taxon>Pipidae</taxon>
        <taxon>Xenopodinae</taxon>
        <taxon>Xenopus</taxon>
        <taxon>Silurana</taxon>
    </lineage>
</organism>
<accession>Q28E95</accession>
<dbReference type="EC" id="2.3.2.27" evidence="4"/>
<dbReference type="EMBL" id="CR848380">
    <property type="protein sequence ID" value="CAJ83039.1"/>
    <property type="molecule type" value="mRNA"/>
</dbReference>
<dbReference type="RefSeq" id="NP_001015973.1">
    <property type="nucleotide sequence ID" value="NM_001015973.2"/>
</dbReference>
<dbReference type="SMR" id="Q28E95"/>
<dbReference type="FunCoup" id="Q28E95">
    <property type="interactions" value="536"/>
</dbReference>
<dbReference type="STRING" id="8364.ENSXETP00000032272"/>
<dbReference type="PaxDb" id="8364-ENSXETP00000010793"/>
<dbReference type="GeneID" id="548727"/>
<dbReference type="KEGG" id="xtr:548727"/>
<dbReference type="AGR" id="Xenbase:XB-GENE-950805"/>
<dbReference type="CTD" id="57630"/>
<dbReference type="Xenbase" id="XB-GENE-950805">
    <property type="gene designation" value="sh3rf1"/>
</dbReference>
<dbReference type="eggNOG" id="KOG2177">
    <property type="taxonomic scope" value="Eukaryota"/>
</dbReference>
<dbReference type="HOGENOM" id="CLU_015769_1_0_1"/>
<dbReference type="InParanoid" id="Q28E95"/>
<dbReference type="OrthoDB" id="19092at2759"/>
<dbReference type="TreeFam" id="TF105571"/>
<dbReference type="Reactome" id="R-XTR-9013424">
    <property type="pathway name" value="RHOV GTPase cycle"/>
</dbReference>
<dbReference type="Reactome" id="R-XTR-983168">
    <property type="pathway name" value="Antigen processing: Ubiquitination &amp; Proteasome degradation"/>
</dbReference>
<dbReference type="UniPathway" id="UPA00143"/>
<dbReference type="Proteomes" id="UP000008143">
    <property type="component" value="Chromosome 1"/>
</dbReference>
<dbReference type="GO" id="GO:0005794">
    <property type="term" value="C:Golgi apparatus"/>
    <property type="evidence" value="ECO:0007669"/>
    <property type="project" value="UniProtKB-SubCell"/>
</dbReference>
<dbReference type="GO" id="GO:0030027">
    <property type="term" value="C:lamellipodium"/>
    <property type="evidence" value="ECO:0000250"/>
    <property type="project" value="UniProtKB"/>
</dbReference>
<dbReference type="GO" id="GO:0048471">
    <property type="term" value="C:perinuclear region of cytoplasm"/>
    <property type="evidence" value="ECO:0007669"/>
    <property type="project" value="UniProtKB-SubCell"/>
</dbReference>
<dbReference type="GO" id="GO:0005078">
    <property type="term" value="F:MAP-kinase scaffold activity"/>
    <property type="evidence" value="ECO:0000250"/>
    <property type="project" value="UniProtKB"/>
</dbReference>
<dbReference type="GO" id="GO:0061630">
    <property type="term" value="F:ubiquitin protein ligase activity"/>
    <property type="evidence" value="ECO:0000250"/>
    <property type="project" value="UniProtKB"/>
</dbReference>
<dbReference type="GO" id="GO:0008270">
    <property type="term" value="F:zinc ion binding"/>
    <property type="evidence" value="ECO:0007669"/>
    <property type="project" value="UniProtKB-KW"/>
</dbReference>
<dbReference type="GO" id="GO:0001764">
    <property type="term" value="P:neuron migration"/>
    <property type="evidence" value="ECO:0000250"/>
    <property type="project" value="UniProtKB"/>
</dbReference>
<dbReference type="GO" id="GO:0046330">
    <property type="term" value="P:positive regulation of JNK cascade"/>
    <property type="evidence" value="ECO:0000250"/>
    <property type="project" value="UniProtKB"/>
</dbReference>
<dbReference type="GO" id="GO:0051865">
    <property type="term" value="P:protein autoubiquitination"/>
    <property type="evidence" value="ECO:0000250"/>
    <property type="project" value="UniProtKB"/>
</dbReference>
<dbReference type="GO" id="GO:0043370">
    <property type="term" value="P:regulation of CD4-positive, alpha-beta T cell differentiation"/>
    <property type="evidence" value="ECO:0000250"/>
    <property type="project" value="UniProtKB"/>
</dbReference>
<dbReference type="GO" id="GO:2000564">
    <property type="term" value="P:regulation of CD8-positive, alpha-beta T cell proliferation"/>
    <property type="evidence" value="ECO:0000250"/>
    <property type="project" value="UniProtKB"/>
</dbReference>
<dbReference type="CDD" id="cd16748">
    <property type="entry name" value="RING-HC_SH3RF1"/>
    <property type="match status" value="1"/>
</dbReference>
<dbReference type="CDD" id="cd11927">
    <property type="entry name" value="SH3_SH3RF1_1"/>
    <property type="match status" value="1"/>
</dbReference>
<dbReference type="CDD" id="cd11926">
    <property type="entry name" value="SH3_SH3RF1_3"/>
    <property type="match status" value="1"/>
</dbReference>
<dbReference type="CDD" id="cd11785">
    <property type="entry name" value="SH3_SH3RF_C"/>
    <property type="match status" value="1"/>
</dbReference>
<dbReference type="FunFam" id="3.30.40.10:FF:000077">
    <property type="entry name" value="E3 ubiquitin-protein ligase SH3RF1 isoform X1"/>
    <property type="match status" value="1"/>
</dbReference>
<dbReference type="FunFam" id="2.30.30.40:FF:000063">
    <property type="entry name" value="Putative E3 ubiquitin-protein ligase SH3RF1"/>
    <property type="match status" value="1"/>
</dbReference>
<dbReference type="FunFam" id="2.30.30.40:FF:000091">
    <property type="entry name" value="Putative E3 ubiquitin-protein ligase SH3RF1"/>
    <property type="match status" value="1"/>
</dbReference>
<dbReference type="FunFam" id="2.30.30.40:FF:000118">
    <property type="entry name" value="Putative E3 ubiquitin-protein ligase SH3RF1"/>
    <property type="match status" value="1"/>
</dbReference>
<dbReference type="FunFam" id="2.30.30.40:FF:000001">
    <property type="entry name" value="Sorbin and SH3 domain-containing protein 1 isoform 2"/>
    <property type="match status" value="1"/>
</dbReference>
<dbReference type="Gene3D" id="2.30.30.40">
    <property type="entry name" value="SH3 Domains"/>
    <property type="match status" value="4"/>
</dbReference>
<dbReference type="Gene3D" id="3.30.40.10">
    <property type="entry name" value="Zinc/RING finger domain, C3HC4 (zinc finger)"/>
    <property type="match status" value="1"/>
</dbReference>
<dbReference type="InterPro" id="IPR050384">
    <property type="entry name" value="Endophilin_SH3RF"/>
</dbReference>
<dbReference type="InterPro" id="IPR036028">
    <property type="entry name" value="SH3-like_dom_sf"/>
</dbReference>
<dbReference type="InterPro" id="IPR001452">
    <property type="entry name" value="SH3_domain"/>
</dbReference>
<dbReference type="InterPro" id="IPR035816">
    <property type="entry name" value="SH3RF1/SH3RF3_SH3_4"/>
</dbReference>
<dbReference type="InterPro" id="IPR027370">
    <property type="entry name" value="Znf-RING_euk"/>
</dbReference>
<dbReference type="InterPro" id="IPR001841">
    <property type="entry name" value="Znf_RING"/>
</dbReference>
<dbReference type="InterPro" id="IPR013083">
    <property type="entry name" value="Znf_RING/FYVE/PHD"/>
</dbReference>
<dbReference type="InterPro" id="IPR017907">
    <property type="entry name" value="Znf_RING_CS"/>
</dbReference>
<dbReference type="PANTHER" id="PTHR14167:SF116">
    <property type="entry name" value="CAP, ISOFORM AC"/>
    <property type="match status" value="1"/>
</dbReference>
<dbReference type="PANTHER" id="PTHR14167">
    <property type="entry name" value="SH3 DOMAIN-CONTAINING"/>
    <property type="match status" value="1"/>
</dbReference>
<dbReference type="Pfam" id="PF00018">
    <property type="entry name" value="SH3_1"/>
    <property type="match status" value="2"/>
</dbReference>
<dbReference type="Pfam" id="PF14604">
    <property type="entry name" value="SH3_9"/>
    <property type="match status" value="2"/>
</dbReference>
<dbReference type="Pfam" id="PF13445">
    <property type="entry name" value="zf-RING_UBOX"/>
    <property type="match status" value="1"/>
</dbReference>
<dbReference type="PRINTS" id="PR00499">
    <property type="entry name" value="P67PHOX"/>
</dbReference>
<dbReference type="PRINTS" id="PR00452">
    <property type="entry name" value="SH3DOMAIN"/>
</dbReference>
<dbReference type="SMART" id="SM00184">
    <property type="entry name" value="RING"/>
    <property type="match status" value="1"/>
</dbReference>
<dbReference type="SMART" id="SM00326">
    <property type="entry name" value="SH3"/>
    <property type="match status" value="4"/>
</dbReference>
<dbReference type="SUPFAM" id="SSF57850">
    <property type="entry name" value="RING/U-box"/>
    <property type="match status" value="1"/>
</dbReference>
<dbReference type="SUPFAM" id="SSF50044">
    <property type="entry name" value="SH3-domain"/>
    <property type="match status" value="4"/>
</dbReference>
<dbReference type="PROSITE" id="PS50002">
    <property type="entry name" value="SH3"/>
    <property type="match status" value="4"/>
</dbReference>
<dbReference type="PROSITE" id="PS00518">
    <property type="entry name" value="ZF_RING_1"/>
    <property type="match status" value="1"/>
</dbReference>
<dbReference type="PROSITE" id="PS50089">
    <property type="entry name" value="ZF_RING_2"/>
    <property type="match status" value="1"/>
</dbReference>
<reference key="1">
    <citation type="submission" date="2006-10" db="EMBL/GenBank/DDBJ databases">
        <authorList>
            <consortium name="Sanger Xenopus tropicalis EST/cDNA project"/>
        </authorList>
    </citation>
    <scope>NUCLEOTIDE SEQUENCE [LARGE SCALE MRNA]</scope>
    <source>
        <tissue>Neurula</tissue>
    </source>
</reference>
<feature type="chain" id="PRO_0000334157" description="E3 ubiquitin-protein ligase SH3RF1">
    <location>
        <begin position="1"/>
        <end position="861"/>
    </location>
</feature>
<feature type="domain" description="SH3 1" evidence="6">
    <location>
        <begin position="132"/>
        <end position="191"/>
    </location>
</feature>
<feature type="domain" description="SH3 2" evidence="6">
    <location>
        <begin position="194"/>
        <end position="257"/>
    </location>
</feature>
<feature type="domain" description="SH3 3" evidence="6">
    <location>
        <begin position="435"/>
        <end position="496"/>
    </location>
</feature>
<feature type="domain" description="SH3 4" evidence="6">
    <location>
        <begin position="802"/>
        <end position="861"/>
    </location>
</feature>
<feature type="zinc finger region" description="RING-type" evidence="5">
    <location>
        <begin position="12"/>
        <end position="53"/>
    </location>
</feature>
<feature type="region of interest" description="Disordered" evidence="7">
    <location>
        <begin position="268"/>
        <end position="319"/>
    </location>
</feature>
<feature type="region of interest" description="Disordered" evidence="7">
    <location>
        <begin position="684"/>
        <end position="731"/>
    </location>
</feature>
<feature type="compositionally biased region" description="Low complexity" evidence="7">
    <location>
        <begin position="273"/>
        <end position="285"/>
    </location>
</feature>
<feature type="compositionally biased region" description="Polar residues" evidence="7">
    <location>
        <begin position="301"/>
        <end position="317"/>
    </location>
</feature>
<feature type="compositionally biased region" description="Basic and acidic residues" evidence="7">
    <location>
        <begin position="689"/>
        <end position="700"/>
    </location>
</feature>